<organismHost>
    <name type="scientific">Cercopithecidae</name>
    <name type="common">Old World monkeys</name>
    <dbReference type="NCBI Taxonomy" id="9527"/>
</organismHost>
<comment type="function">
    <text evidence="1">Gag-Pol polyprotein and Gag polyprotein may regulate their own translation, by the binding genomic RNA in the 5'-UTR. At low concentration, Gag-Pol and Gag would promote translation, whereas at high concentration, the polyproteins encapsidate genomic RNA and then shut off translation (By similarity).</text>
</comment>
<comment type="function">
    <text evidence="1">Matrix protein p17 has two main functions: in infected cell, it targets Gag and Gag-pol polyproteins to the plasma membrane via a multipartite membrane-binding signal, that includes its myristointegration complex. The myristoylation signal and the NLS exert conflicting influences its subcellular localization. The key regulation of these motifs might be phosphorylation of a portion of MA molecules on the C-terminal tyrosine at the time of virus maturation, by virion-associated cellular tyrosine kinase. Implicated in the release from host cell mediated by Vpu (By similarity).</text>
</comment>
<comment type="function">
    <text evidence="1">Capsid protein p24 forms the conical core that encapsulates the genomic RNA-nucleocapsid complex in the virion. The core is constituted by capsid protein hexamer subunits. The core is disassembled soon after virion entry. Interaction with host PPIA/CYPA protects the virus from restriction by host TRIM5-alpha and from an unknown antiviral activity in host cells. This capsid restriction by TRIM5 is one of the factors which restricts SIV to the simian species (By similarity).</text>
</comment>
<comment type="function">
    <text evidence="1">Nucleocapsid protein p7 encapsulates and protects viral dimeric unspliced (genomic) RNA. Binds these RNAs through its zinc fingers. Facilitates rearangement of nucleic acid secondary structure during retrotranscription of genomic RNA. This capability is referred to as nucleic acid chaperone activity (By similarity).</text>
</comment>
<comment type="function">
    <text evidence="10">The aspartyl protease mediates proteolytic cleavages of Gag and Gag-Pol polyproteins during or shortly after the release of the virion from the plasma membrane. Cleavages take place as an ordered, step-wise cascade to yield mature proteins. This process is called maturation. Displays maximal activity during the budding process just prior to particle release from the cell. Also cleaves Nef and Vif, probably concomitantly with viral structural proteins on maturation of virus particles. Hydrolyzes host EIF4GI and PABP1 in order to shut off the capped cellular mRNA translation. The resulting inhibition of cellular protein synthesis serves to ensure maximal viral gene expression and to evade host immune response (By similarity).</text>
</comment>
<comment type="function">
    <text evidence="1">Reverse transcriptase/ribonuclease H (RT) is a multifunctional enzyme that converts the viral dimeric RNA genome into dsDNA in the cytoplasm, shortly after virus entry into the cell. This enzyme displays a DNA polymerase activity that can copy either DNA or RNA templates, and a ribonuclease H (RNase H) activity that cleaves the RNA strand of RNA-DNA heteroduplexes in a partially processive 3' to 5' endonucleasic mode. Conversion of viral genomic RNA into dsDNA requires many steps. A tRNA binds to the primer-binding site (PBS) situated at the 5'-end of the viral RNA. RT uses the 3' end of the tRNA primer to perform a short round of RNA-dependent minus-strand DNA synthesis. The reading proceeds through the U5 region and ends after the repeated (R) region which is present at both ends of viral RNA. The portion of the RNA-DNA heteroduplex is digested by the RNase H, resulting in a ssDNA product attached to the tRNA primer. This ssDNA/tRNA hybridizes with the identical R region situated at the 3' end of viral RNA. This template exchange, known as minus-strand DNA strong stop transfer, can be either intra- or intermolecular. RT uses the 3' end of this newly synthesized short ssDNA to perform the RNA-dependent minus-strand DNA synthesis of the whole template. RNase H digests the RNA template except for two polypurine tracts (PPTs) situated at the 5'-end and near the center of the genome. It is not clear if both polymerase and RNase H activities are simultaneous. RNase H can probably proceed both in a polymerase-dependent (RNA cut into small fragments by the same RT performing DNA synthesis) and a polymerase-independent mode (cleavage of remaining RNA fragments by free RTs). Secondly, RT performs DNA-directed plus-strand DNA synthesis using the PPTs that have not been removed by RNase H as primers. PPTs and tRNA primers are then removed by RNase H. The 3' and 5' ssDNA PBS regions hybridize to form a circular dsDNA intermediate. Strand displacement synthesis by RT to the PBS and PPT ends produces a blunt ended, linear dsDNA copy of the viral genome that includes long terminal repeats (LTRs) at both ends (By similarity).</text>
</comment>
<comment type="function">
    <text evidence="1">Integrase catalyzes viral DNA integration into the host chromosome, by performing a series of DNA cutting and joining reactions. This enzyme activity takes place after virion entry into a cell and reverse transcription of the RNA genome in dsDNA. The first step in the integration process is 3' processing. This step requires a complex comprising the viral genome, matrix protein, Vpr and integrase. This complex is called the pre-integration complex (PIC). The integrase protein removes 2 nucleotides from each 3' end of the viral DNA, leaving recessed CA OH's at the 3' ends. In the second step, the PIC enters cell nucleus. This process is mediated through integrase and Vpr proteins, and allows the virus to infect a non dividing cell. This ability to enter the nucleus is specific of lentiviruses, other retroviruses cannot and rely on cell division to access cell chromosomes. In the third step, termed strand transfer, the integrase protein joins the previously processed 3' ends to the 5' ends of strands of target cellular DNA at the site of integration. The 5'-ends are produced by integrase-catalyzed staggered cuts, 5 bp apart. A Y-shaped, gapped, recombination intermediate results, with the 5'-ends of the viral DNA strands and the 3' ends of target DNA strands remaining unjoined, flanking a gap of 5 bp. The last step is viral DNA integration into host chromosome. This involves host DNA repair synthesis in which the 5 bp gaps between the unjoined strands are filled in and then ligated. Since this process occurs at both cuts flanking the SIV genome, a 5 bp duplication of host DNA is produced at the ends of SIV integration. Alternatively, Integrase may catalyze the excision of viral DNA just after strand transfer, this is termed disintegration (By similarity).</text>
</comment>
<comment type="catalytic activity">
    <reaction evidence="10">
        <text>Specific for a P1 residue that is hydrophobic, and P1' variable, but often Pro.</text>
        <dbReference type="EC" id="3.4.23.16"/>
    </reaction>
</comment>
<comment type="catalytic activity">
    <reaction>
        <text>Endohydrolysis of RNA in RNA/DNA hybrids. Three different cleavage modes: 1. sequence-specific internal cleavage of RNA. Human immunodeficiency virus type 1 and Moloney murine leukemia virus enzymes prefer to cleave the RNA strand one nucleotide away from the RNA-DNA junction. 2. RNA 5'-end directed cleavage 13-19 nucleotides from the RNA end. 3. DNA 3'-end directed cleavage 15-20 nucleotides away from the primer terminus.</text>
        <dbReference type="EC" id="3.1.26.13"/>
    </reaction>
</comment>
<comment type="catalytic activity">
    <reaction>
        <text>3'-end directed exonucleolytic cleavage of viral RNA-DNA hybrid.</text>
        <dbReference type="EC" id="3.1.13.2"/>
    </reaction>
</comment>
<comment type="catalytic activity">
    <reaction evidence="11">
        <text>DNA(n) + a 2'-deoxyribonucleoside 5'-triphosphate = DNA(n+1) + diphosphate</text>
        <dbReference type="Rhea" id="RHEA:22508"/>
        <dbReference type="Rhea" id="RHEA-COMP:17339"/>
        <dbReference type="Rhea" id="RHEA-COMP:17340"/>
        <dbReference type="ChEBI" id="CHEBI:33019"/>
        <dbReference type="ChEBI" id="CHEBI:61560"/>
        <dbReference type="ChEBI" id="CHEBI:173112"/>
        <dbReference type="EC" id="2.7.7.49"/>
    </reaction>
</comment>
<comment type="catalytic activity">
    <reaction evidence="11">
        <text>DNA(n) + a 2'-deoxyribonucleoside 5'-triphosphate = DNA(n+1) + diphosphate</text>
        <dbReference type="Rhea" id="RHEA:22508"/>
        <dbReference type="Rhea" id="RHEA-COMP:17339"/>
        <dbReference type="Rhea" id="RHEA-COMP:17340"/>
        <dbReference type="ChEBI" id="CHEBI:33019"/>
        <dbReference type="ChEBI" id="CHEBI:61560"/>
        <dbReference type="ChEBI" id="CHEBI:173112"/>
        <dbReference type="EC" id="2.7.7.7"/>
    </reaction>
</comment>
<comment type="cofactor">
    <cofactor evidence="1">
        <name>Mg(2+)</name>
        <dbReference type="ChEBI" id="CHEBI:18420"/>
    </cofactor>
    <text evidence="1">Binds 2 magnesium ions for reverse transcriptase polymerase activity.</text>
</comment>
<comment type="cofactor">
    <cofactor evidence="1">
        <name>Mg(2+)</name>
        <dbReference type="ChEBI" id="CHEBI:18420"/>
    </cofactor>
    <text evidence="1">Binds 2 magnesium ions for ribonuclease H (RNase H) activity. Substrate-binding is a precondition for magnesium binding.</text>
</comment>
<comment type="cofactor">
    <cofactor evidence="1">
        <name>Mg(2+)</name>
        <dbReference type="ChEBI" id="CHEBI:18420"/>
    </cofactor>
    <text evidence="1">Magnesium ions are required for integrase activity. Binds at least 1, maybe 2 magnesium ions.</text>
</comment>
<comment type="activity regulation">
    <text>The viral protease is inhibited by many synthetic protease inhibitors (PIs), such as amprenavir, atazanavir, indinavir, loprinavir, nelfinavir, ritonavir and saquinavir. RT can be inhibited either by nucleoside RT inhibitors (NRTIs) or by non nucleoside RT inhibitors (NNRTIs). NRTIs act as chain terminators, whereas NNRTIs inhibit DNA polymerization by binding a small hydrophobic pocket near the RT active site and inducing an allosteric change in this region. Classical NRTIs are abacavir, adefovir (PMEA), didanosine (ddI), lamivudine (3TC), stavudine (d4T), tenofovir (PMPA), zalcitabine (ddC), and zidovudine (AZT). Classical NNRTIs are atevirdine (BHAP U-87201E), delavirdine, efavirenz (DMP-266), emivirine (I-EBU), and nevirapine (BI-RG-587). The tritherapies used as a basic effective treatment of AIDS associate two NRTIs and one NNRTI. Use of protease inhibitors in tritherapy regimens permit more ambitious therapeutic strategies.</text>
</comment>
<comment type="subunit">
    <molecule>Matrix protein p17</molecule>
    <text evidence="5 6">Homotrimer. Interacts with gp41 (via C-terminus).</text>
</comment>
<comment type="subunit">
    <molecule>Protease</molecule>
    <text evidence="4 7">Homodimer. The active site consists of two apposed aspartic acid residues.</text>
</comment>
<comment type="subunit">
    <molecule>Reverse transcriptase/ribonuclease H</molecule>
    <text evidence="2">Heterodimer of p66 RT and p51 RT (RT p66/p51). Heterodimerization of RT is essential for DNA polymerase activity. Despite the sequence identities, p66 RT and p51 RT have distinct folding.</text>
</comment>
<comment type="subunit">
    <molecule>Integrase</molecule>
    <text evidence="3">Homotetramer; may further associate as a homohexadecamer (By similarity).</text>
</comment>
<comment type="subcellular location">
    <molecule>Matrix protein p17</molecule>
    <subcellularLocation>
        <location evidence="18">Virion</location>
    </subcellularLocation>
    <subcellularLocation>
        <location evidence="1">Host nucleus</location>
    </subcellularLocation>
    <subcellularLocation>
        <location evidence="1">Host cytoplasm</location>
    </subcellularLocation>
    <subcellularLocation>
        <location evidence="18">Host cell membrane</location>
        <topology evidence="18">Lipid-anchor</topology>
    </subcellularLocation>
    <text evidence="1">Following virus entry, the nuclear localization signal (NLS) of the matrix protein participates with Vpr to the nuclear localization of the viral genome. During virus production, the nuclear export activity of the matrix protein counteracts the NLS to maintain the Gag and Gag-Pol polyproteins in the cytoplasm, thereby directing unspliced RNA to the plasma membrane (By similarity).</text>
</comment>
<comment type="subcellular location">
    <molecule>Capsid protein p24</molecule>
    <subcellularLocation>
        <location evidence="18">Virion</location>
    </subcellularLocation>
</comment>
<comment type="subcellular location">
    <molecule>Nucleocapsid protein p7</molecule>
    <subcellularLocation>
        <location evidence="18">Virion</location>
    </subcellularLocation>
</comment>
<comment type="subcellular location">
    <molecule>Reverse transcriptase/ribonuclease H</molecule>
    <subcellularLocation>
        <location evidence="18">Virion</location>
    </subcellularLocation>
</comment>
<comment type="subcellular location">
    <molecule>Integrase</molecule>
    <subcellularLocation>
        <location evidence="18">Virion</location>
    </subcellularLocation>
    <subcellularLocation>
        <location evidence="18">Host nucleus</location>
    </subcellularLocation>
    <subcellularLocation>
        <location evidence="18">Host cytoplasm</location>
    </subcellularLocation>
    <text evidence="18">Nuclear at initial phase, cytoplasmic at assembly.</text>
</comment>
<comment type="alternative products">
    <event type="ribosomal frameshifting"/>
    <isoform>
        <id>P05896-1</id>
        <name>Gag-Pol polyprotein</name>
        <sequence type="displayed"/>
    </isoform>
    <isoform>
        <id>P05894-1</id>
        <name>Gag polyprotein</name>
        <sequence type="external"/>
    </isoform>
    <text>Translation results in the formation of the Gag polyprotein most of the time. Ribosomal frameshifting at the gag-pol genes boundary occurs at low frequency and produces the Gag-Pol polyprotein. This strategy of translation probably allows the virus to modulate the quantity of each viral protein. Maintenance of a correct Gag to Gag-Pol ratio is essential for RNA dimerization and viral infectivity.</text>
</comment>
<comment type="domain">
    <text evidence="1">The p66 RT is structured in five subdomains: finger, palm, thumb, connection and RNase H. Within the palm subdomain, the 'primer grip' region is thought to be involved in the positioning of the primer terminus for accommodating the incoming nucleotide. The RNase H domain stabilizes the association of RT with primer-template (By similarity).</text>
</comment>
<comment type="domain">
    <text evidence="1">The tryptophan repeat motif is involved in RT p66/p51 dimerization.</text>
</comment>
<comment type="PTM">
    <text evidence="11">Specific enzymatic cleavages by the viral protease yield mature proteins. The protease is released by autocatalytic cleavage. The polyprotein is cleaved during and after budding, this process is termed maturation. Proteolytic cleavage of p66 RT removes the RNase H domain to yield the p51 RT subunit.</text>
</comment>
<comment type="PTM">
    <text>Capsid protein p24 is phosphorylated.</text>
</comment>
<comment type="miscellaneous">
    <text>This is a macaque isolate.</text>
</comment>
<comment type="miscellaneous">
    <text>The reverse transcriptase is an error-prone enzyme that lacks a proof-reading function. High mutations rate is a direct consequence of this characteristic. RT also displays frequent template switching leading to high recombination rate. Recombination mostly occurs between homologous regions of the two copackaged RNA genomes. If these two RNA molecules derive from different viral strains, reverse transcription will give rise to highly recombinated proviral DNAs.</text>
</comment>
<comment type="miscellaneous">
    <molecule>Isoform Gag-Pol polyprotein</molecule>
    <text>Produced by -1 ribosomal frameshifting.</text>
</comment>
<sequence length="1448" mass="163372">MGARNSVLSGKKADELEKIRLRPGGKKKYMLKHVVWAANELDRFGLAESLLENKEGCQKILSVLAPLVPTGSENLKSLYNTVCVIWCIHAEEKVKHTEEAKQIVQRHLVMETGTAETMPKTSRPTAPFSGRGGNYPVQQIGGNYTHLPLSPRTLNAWVKLIEEKKFGAEVVSGFQALSEGCLPYDINQMLNCVGDHQAAMQIIRDIINEEAADWDLQHPQQAPQQGQLREPSGSDIAGTTSTVEEQIQWMYRQQNPIPVGNIYRRWIQLGLQKCVRMYNPTNILDVKQGPKEPFQSYVDRFYKSLRAEQTDPAVKNWMTQTLLIQNANPDCKLVLKGLGTNPTLEEMLTACQGVGGPGQKARLMAEALKEALAPAPIPFAAAQQKGPRKPIKCWNCGKEGHSARQCRAPRRQGCWKCGKMDHVMAKCPNRQAGFFRPWPLGKEAPQFPHGSSASGADANCSPRRTSCGSAKELHALGQAAERKQREALQGGDRGFAAPQFSLWRRPVVTAHIEGQPVEVLLDTGADDSIVTGIELGPHYTPKIVGGIGGFINTKEYKNVEIEVLGKRIKGTIMTGDTPINIFGRNLLTALGMSLNLPIAKVEPVKSPLKPGKDGPKLKQWPLSKEKIVALREICEKMEKDGQLEEAPPTNPYNTPTFAIKKKDKNKWRMLIDFRELNRVTQDFTEVQLGIPHPAGLAKRKRITVLDIGDAYFSIPLDEEFRQYTAFTLPSVNNAEPGKRYIYKVLPQGWKGSPAIFQYTMRHVLEPFRKANPDVTLVQYMDDILIASDRTDLEHDRVVLQLKELLNSIGFSSPEEKFQKDPPFQWMGYELWPTKWKLQKIELPQRETWTVNDIQKLVGVLNWAAQIYPGIKTKHLCRLIRGKMTLTEEVQWTEMAEAEYEENKIILSQEQEGCYYQESKPLEATVIKSQDNQWSYKIHQEDKILKVGKFAKIKNTHTNGVRLLAHVIQKIGKEAIVIWGQVPKFHLPVEKDVWEQWWTDYWQVTWIPEWDFISTPPLVRLVFNLVKDPIEGEETYYVDGSCSKQSKEGKAGYITDRGKDKVKVLEQTTNQQAELEAFLMALTDSGPKANIIVDSQYVMGIITGCPTESESRLVNQIIEEMIKKTEIYVAWVPAHKGIGGNQEIDHLVSQGIRQVLFLEKIEPAQEEHSKYHSNIKELVFKFGLPRLVAKQIVDTCDKCHQKGEAIHGQVNSDLGTWQMDCTHLEGKIVIVAVHVASGFIEAEVIPQETGRQTALFLLKLASRWPITHLHTDNGANFASQEVKMVAWWAGIEHTFGVPYNPQSQGVVEAMNHHLKNQIDRIREQANSVETIVLMAVHCMNFKRRGGIGDMTPAERLINMITTEQEIQFQQSKNSKFKNFRVYYREGRDQLWKGPGELLWKGEGAVILKVGTDIKVVPRRKAKIIKDYGGGKEMDSSSHMEDTGEAREVA</sequence>
<protein>
    <recommendedName>
        <fullName>Gag-Pol polyprotein</fullName>
    </recommendedName>
    <alternativeName>
        <fullName>Pr160Gag-Pol</fullName>
    </alternativeName>
    <component>
        <recommendedName>
            <fullName>Matrix protein p17</fullName>
            <shortName>MA</shortName>
        </recommendedName>
    </component>
    <component>
        <recommendedName>
            <fullName>Capsid protein p24</fullName>
            <shortName>CA</shortName>
        </recommendedName>
    </component>
    <component>
        <recommendedName>
            <fullName>Nucleocapsid protein p7</fullName>
            <shortName>NC</shortName>
        </recommendedName>
    </component>
    <component>
        <recommendedName>
            <fullName>p6-pol</fullName>
            <shortName>p6*</shortName>
        </recommendedName>
    </component>
    <component>
        <recommendedName>
            <fullName>Protease</fullName>
            <ecNumber>3.4.23.16</ecNumber>
        </recommendedName>
        <alternativeName>
            <fullName>PR</fullName>
        </alternativeName>
        <alternativeName>
            <fullName>Retropepsin</fullName>
        </alternativeName>
    </component>
    <component>
        <recommendedName>
            <fullName>Reverse transcriptase/ribonuclease H</fullName>
            <ecNumber>2.7.7.49</ecNumber>
            <ecNumber>2.7.7.7</ecNumber>
            <ecNumber>3.1.26.13</ecNumber>
        </recommendedName>
        <alternativeName>
            <fullName>Exoribonuclease H</fullName>
            <ecNumber>3.1.13.2</ecNumber>
        </alternativeName>
        <alternativeName>
            <fullName>p66 RT</fullName>
        </alternativeName>
    </component>
    <component>
        <recommendedName>
            <fullName>p51 RT</fullName>
        </recommendedName>
    </component>
    <component>
        <recommendedName>
            <fullName>p15</fullName>
        </recommendedName>
    </component>
    <component>
        <recommendedName>
            <fullName>Integrase</fullName>
            <shortName>IN</shortName>
            <ecNumber evidence="4">2.7.7.-</ecNumber>
            <ecNumber evidence="4">3.1.-.-</ecNumber>
        </recommendedName>
    </component>
</protein>
<keyword id="KW-0002">3D-structure</keyword>
<keyword id="KW-0064">Aspartyl protease</keyword>
<keyword id="KW-0167">Capsid protein</keyword>
<keyword id="KW-0229">DNA integration</keyword>
<keyword id="KW-0233">DNA recombination</keyword>
<keyword id="KW-0238">DNA-binding</keyword>
<keyword id="KW-0239">DNA-directed DNA polymerase</keyword>
<keyword id="KW-0255">Endonuclease</keyword>
<keyword id="KW-1262">Eukaryotic host gene expression shutoff by virus</keyword>
<keyword id="KW-1193">Eukaryotic host translation shutoff by virus</keyword>
<keyword id="KW-1032">Host cell membrane</keyword>
<keyword id="KW-1035">Host cytoplasm</keyword>
<keyword id="KW-1190">Host gene expression shutoff by virus</keyword>
<keyword id="KW-1043">Host membrane</keyword>
<keyword id="KW-1048">Host nucleus</keyword>
<keyword id="KW-0945">Host-virus interaction</keyword>
<keyword id="KW-0378">Hydrolase</keyword>
<keyword id="KW-0449">Lipoprotein</keyword>
<keyword id="KW-0460">Magnesium</keyword>
<keyword id="KW-0472">Membrane</keyword>
<keyword id="KW-0479">Metal-binding</keyword>
<keyword id="KW-0511">Multifunctional enzyme</keyword>
<keyword id="KW-0519">Myristate</keyword>
<keyword id="KW-0540">Nuclease</keyword>
<keyword id="KW-0548">Nucleotidyltransferase</keyword>
<keyword id="KW-0597">Phosphoprotein</keyword>
<keyword id="KW-0645">Protease</keyword>
<keyword id="KW-0677">Repeat</keyword>
<keyword id="KW-0688">Ribosomal frameshifting</keyword>
<keyword id="KW-0694">RNA-binding</keyword>
<keyword id="KW-0695">RNA-directed DNA polymerase</keyword>
<keyword id="KW-0808">Transferase</keyword>
<keyword id="KW-1179">Viral genome integration</keyword>
<keyword id="KW-0543">Viral nucleoprotein</keyword>
<keyword id="KW-1163">Viral penetration into host nucleus</keyword>
<keyword id="KW-1188">Viral release from host cell</keyword>
<keyword id="KW-0946">Virion</keyword>
<keyword id="KW-0917">Virion maturation</keyword>
<keyword id="KW-1160">Virus entry into host cell</keyword>
<keyword id="KW-0862">Zinc</keyword>
<keyword id="KW-0863">Zinc-finger</keyword>
<proteinExistence type="evidence at protein level"/>
<gene>
    <name type="primary">gag-pol</name>
</gene>
<accession>P05896</accession>
<evidence type="ECO:0000250" key="1"/>
<evidence type="ECO:0000250" key="2">
    <source>
        <dbReference type="UniProtKB" id="P03366"/>
    </source>
</evidence>
<evidence type="ECO:0000250" key="3">
    <source>
        <dbReference type="UniProtKB" id="P03367"/>
    </source>
</evidence>
<evidence type="ECO:0000250" key="4">
    <source>
        <dbReference type="UniProtKB" id="P04585"/>
    </source>
</evidence>
<evidence type="ECO:0000250" key="5">
    <source>
        <dbReference type="UniProtKB" id="P04591"/>
    </source>
</evidence>
<evidence type="ECO:0000250" key="6">
    <source>
        <dbReference type="UniProtKB" id="P12493"/>
    </source>
</evidence>
<evidence type="ECO:0000250" key="7">
    <source>
        <dbReference type="UniProtKB" id="P12497"/>
    </source>
</evidence>
<evidence type="ECO:0000255" key="8"/>
<evidence type="ECO:0000255" key="9">
    <source>
        <dbReference type="PROSITE-ProRule" id="PRU00047"/>
    </source>
</evidence>
<evidence type="ECO:0000255" key="10">
    <source>
        <dbReference type="PROSITE-ProRule" id="PRU00275"/>
    </source>
</evidence>
<evidence type="ECO:0000255" key="11">
    <source>
        <dbReference type="PROSITE-ProRule" id="PRU00405"/>
    </source>
</evidence>
<evidence type="ECO:0000255" key="12">
    <source>
        <dbReference type="PROSITE-ProRule" id="PRU00408"/>
    </source>
</evidence>
<evidence type="ECO:0000255" key="13">
    <source>
        <dbReference type="PROSITE-ProRule" id="PRU00450"/>
    </source>
</evidence>
<evidence type="ECO:0000255" key="14">
    <source>
        <dbReference type="PROSITE-ProRule" id="PRU00457"/>
    </source>
</evidence>
<evidence type="ECO:0000255" key="15">
    <source>
        <dbReference type="PROSITE-ProRule" id="PRU00506"/>
    </source>
</evidence>
<evidence type="ECO:0000255" key="16">
    <source>
        <dbReference type="PROSITE-ProRule" id="PRU10094"/>
    </source>
</evidence>
<evidence type="ECO:0000256" key="17">
    <source>
        <dbReference type="SAM" id="MobiDB-lite"/>
    </source>
</evidence>
<evidence type="ECO:0000305" key="18"/>
<evidence type="ECO:0007829" key="19">
    <source>
        <dbReference type="PDB" id="1AZ5"/>
    </source>
</evidence>
<evidence type="ECO:0007829" key="20">
    <source>
        <dbReference type="PDB" id="1TCW"/>
    </source>
</evidence>
<evidence type="ECO:0007829" key="21">
    <source>
        <dbReference type="PDB" id="1YTI"/>
    </source>
</evidence>
<reference key="1">
    <citation type="journal article" date="1987" name="Nature">
        <title>Sequence of simian immunodeficiency virus from macaque and its relationship to other human and simian retroviruses.</title>
        <authorList>
            <person name="Chakrabarti L."/>
            <person name="Guyader M."/>
            <person name="Alizon M."/>
            <person name="Daniel M.D."/>
            <person name="Desrosiers R.C."/>
            <person name="Tiollais P."/>
            <person name="Sonigo P."/>
        </authorList>
    </citation>
    <scope>NUCLEOTIDE SEQUENCE [GENOMIC DNA]</scope>
</reference>
<reference key="2">
    <citation type="journal article" date="1998" name="Biochemistry">
        <title>Domain flexibility in retroviral proteases: structural implications for drug resistant mutations.</title>
        <authorList>
            <person name="Rose R.B."/>
            <person name="Craik C.S."/>
            <person name="Stroud R.M."/>
        </authorList>
    </citation>
    <scope>X-RAY CRYSTALLOGRAPHY (2.0 ANGSTROMS) OF 498-595</scope>
</reference>
<feature type="initiator methionine" description="Removed; by host" evidence="1">
    <location>
        <position position="1"/>
    </location>
</feature>
<feature type="chain" id="PRO_0000306035" description="Gag-Pol polyprotein">
    <location>
        <begin position="2"/>
        <end position="1448"/>
    </location>
</feature>
<feature type="chain" id="PRO_0000306036" description="Matrix protein p17" evidence="1">
    <location>
        <begin position="2"/>
        <end position="135"/>
    </location>
</feature>
<feature type="chain" id="PRO_0000306037" description="Capsid protein p24" evidence="1">
    <location>
        <begin position="136"/>
        <end position="364"/>
    </location>
</feature>
<feature type="chain" id="PRO_0000306038" description="Nucleocapsid protein p7" evidence="1">
    <location>
        <begin position="365"/>
        <end position="433"/>
    </location>
</feature>
<feature type="chain" id="PRO_0000306039" description="p6-pol" evidence="8">
    <location>
        <begin position="434"/>
        <end position="500"/>
    </location>
</feature>
<feature type="chain" id="PRO_0000306040" description="Protease" evidence="1">
    <location>
        <begin position="501"/>
        <end position="596"/>
    </location>
</feature>
<feature type="chain" id="PRO_0000306041" description="Reverse transcriptase/ribonuclease H" evidence="1">
    <location>
        <begin position="597"/>
        <end position="1155"/>
    </location>
</feature>
<feature type="chain" id="PRO_0000306042" description="p51 RT" evidence="1">
    <location>
        <begin position="597"/>
        <end position="1035"/>
    </location>
</feature>
<feature type="chain" id="PRO_0000306043" description="p15" evidence="1">
    <location>
        <begin position="1036"/>
        <end position="1155"/>
    </location>
</feature>
<feature type="chain" id="PRO_0000306044" description="Integrase" evidence="1">
    <location>
        <begin position="1156"/>
        <end position="1448"/>
    </location>
</feature>
<feature type="domain" description="Peptidase A2" evidence="10">
    <location>
        <begin position="517"/>
        <end position="586"/>
    </location>
</feature>
<feature type="domain" description="Reverse transcriptase" evidence="11">
    <location>
        <begin position="640"/>
        <end position="830"/>
    </location>
</feature>
<feature type="domain" description="RNase H type-1" evidence="12">
    <location>
        <begin position="1029"/>
        <end position="1152"/>
    </location>
</feature>
<feature type="domain" description="Integrase catalytic" evidence="14">
    <location>
        <begin position="1209"/>
        <end position="1359"/>
    </location>
</feature>
<feature type="zinc finger region" description="CCHC-type 1" evidence="9">
    <location>
        <begin position="391"/>
        <end position="408"/>
    </location>
</feature>
<feature type="zinc finger region" description="CCHC-type 2" evidence="9">
    <location>
        <begin position="412"/>
        <end position="429"/>
    </location>
</feature>
<feature type="zinc finger region" description="Integrase-type" evidence="13">
    <location>
        <begin position="1158"/>
        <end position="1199"/>
    </location>
</feature>
<feature type="DNA-binding region" description="Integrase-type" evidence="15">
    <location>
        <begin position="1378"/>
        <end position="1425"/>
    </location>
</feature>
<feature type="region of interest" description="Disordered" evidence="17">
    <location>
        <begin position="218"/>
        <end position="237"/>
    </location>
</feature>
<feature type="region of interest" description="Disordered" evidence="17">
    <location>
        <begin position="440"/>
        <end position="461"/>
    </location>
</feature>
<feature type="region of interest" description="RT 'primer grip'" evidence="1">
    <location>
        <begin position="823"/>
        <end position="831"/>
    </location>
</feature>
<feature type="region of interest" description="Disordered" evidence="17">
    <location>
        <begin position="1426"/>
        <end position="1448"/>
    </location>
</feature>
<feature type="short sequence motif" description="Nuclear export signal" evidence="1">
    <location>
        <begin position="16"/>
        <end position="22"/>
    </location>
</feature>
<feature type="short sequence motif" description="Nuclear localization signal" evidence="1">
    <location>
        <begin position="26"/>
        <end position="32"/>
    </location>
</feature>
<feature type="short sequence motif" description="Tryptophan repeat motif" evidence="1">
    <location>
        <begin position="993"/>
        <end position="1009"/>
    </location>
</feature>
<feature type="compositionally biased region" description="Low complexity" evidence="17">
    <location>
        <begin position="218"/>
        <end position="227"/>
    </location>
</feature>
<feature type="active site" description="For protease activity; shared with dimeric partner" evidence="16">
    <location>
        <position position="522"/>
    </location>
</feature>
<feature type="binding site" evidence="1">
    <location>
        <position position="706"/>
    </location>
    <ligand>
        <name>Mg(2+)</name>
        <dbReference type="ChEBI" id="CHEBI:18420"/>
        <label>1</label>
        <note>catalytic; for reverse transcriptase activity</note>
    </ligand>
</feature>
<feature type="binding site" evidence="1">
    <location>
        <position position="781"/>
    </location>
    <ligand>
        <name>Mg(2+)</name>
        <dbReference type="ChEBI" id="CHEBI:18420"/>
        <label>1</label>
        <note>catalytic; for reverse transcriptase activity</note>
    </ligand>
</feature>
<feature type="binding site" evidence="1">
    <location>
        <position position="782"/>
    </location>
    <ligand>
        <name>Mg(2+)</name>
        <dbReference type="ChEBI" id="CHEBI:18420"/>
        <label>1</label>
        <note>catalytic; for reverse transcriptase activity</note>
    </ligand>
</feature>
<feature type="binding site" evidence="1">
    <location>
        <position position="1038"/>
    </location>
    <ligand>
        <name>Mg(2+)</name>
        <dbReference type="ChEBI" id="CHEBI:18420"/>
        <label>2</label>
        <note>catalytic; for RNase H activity</note>
    </ligand>
</feature>
<feature type="binding site" evidence="1">
    <location>
        <position position="1073"/>
    </location>
    <ligand>
        <name>Mg(2+)</name>
        <dbReference type="ChEBI" id="CHEBI:18420"/>
        <label>2</label>
        <note>catalytic; for RNase H activity</note>
    </ligand>
</feature>
<feature type="binding site" evidence="1">
    <location>
        <position position="1093"/>
    </location>
    <ligand>
        <name>Mg(2+)</name>
        <dbReference type="ChEBI" id="CHEBI:18420"/>
        <label>2</label>
        <note>catalytic; for RNase H activity</note>
    </ligand>
</feature>
<feature type="binding site" evidence="1">
    <location>
        <position position="1144"/>
    </location>
    <ligand>
        <name>Mg(2+)</name>
        <dbReference type="ChEBI" id="CHEBI:18420"/>
        <label>2</label>
        <note>catalytic; for RNase H activity</note>
    </ligand>
</feature>
<feature type="binding site" evidence="13">
    <location>
        <position position="1167"/>
    </location>
    <ligand>
        <name>Zn(2+)</name>
        <dbReference type="ChEBI" id="CHEBI:29105"/>
    </ligand>
</feature>
<feature type="binding site" evidence="13">
    <location>
        <position position="1171"/>
    </location>
    <ligand>
        <name>Zn(2+)</name>
        <dbReference type="ChEBI" id="CHEBI:29105"/>
    </ligand>
</feature>
<feature type="binding site" evidence="13">
    <location>
        <position position="1195"/>
    </location>
    <ligand>
        <name>Zn(2+)</name>
        <dbReference type="ChEBI" id="CHEBI:29105"/>
    </ligand>
</feature>
<feature type="binding site" evidence="13">
    <location>
        <position position="1198"/>
    </location>
    <ligand>
        <name>Zn(2+)</name>
        <dbReference type="ChEBI" id="CHEBI:29105"/>
    </ligand>
</feature>
<feature type="binding site" evidence="1">
    <location>
        <position position="1219"/>
    </location>
    <ligand>
        <name>Mg(2+)</name>
        <dbReference type="ChEBI" id="CHEBI:18420"/>
        <label>3</label>
        <note>catalytic; for integrase activity</note>
    </ligand>
</feature>
<feature type="binding site" evidence="1">
    <location>
        <position position="1271"/>
    </location>
    <ligand>
        <name>Mg(2+)</name>
        <dbReference type="ChEBI" id="CHEBI:18420"/>
        <label>3</label>
        <note>catalytic; for integrase activity</note>
    </ligand>
</feature>
<feature type="site" description="Cleavage; by viral protease" evidence="1">
    <location>
        <begin position="135"/>
        <end position="136"/>
    </location>
</feature>
<feature type="site" description="Cleavage; by viral protease" evidence="1">
    <location>
        <begin position="364"/>
        <end position="365"/>
    </location>
</feature>
<feature type="site" description="Cleavage; by viral protease" evidence="1">
    <location>
        <begin position="433"/>
        <end position="434"/>
    </location>
</feature>
<feature type="site" description="Cleavage; by viral protease" evidence="1">
    <location>
        <begin position="500"/>
        <end position="501"/>
    </location>
</feature>
<feature type="site" description="Cleavage; by viral protease" evidence="1">
    <location>
        <begin position="596"/>
        <end position="597"/>
    </location>
</feature>
<feature type="site" description="Essential for RT p66/p51 heterodimerization" evidence="1">
    <location>
        <position position="996"/>
    </location>
</feature>
<feature type="site" description="Essential for RT p66/p51 heterodimerization" evidence="1">
    <location>
        <position position="1009"/>
    </location>
</feature>
<feature type="site" description="Cleavage; by viral protease" evidence="1">
    <location>
        <begin position="1035"/>
        <end position="1036"/>
    </location>
</feature>
<feature type="site" description="Cleavage; by viral protease" evidence="1">
    <location>
        <begin position="1155"/>
        <end position="1156"/>
    </location>
</feature>
<feature type="lipid moiety-binding region" description="N-myristoyl glycine; by host" evidence="1">
    <location>
        <position position="2"/>
    </location>
</feature>
<feature type="strand" evidence="19">
    <location>
        <begin position="502"/>
        <end position="504"/>
    </location>
</feature>
<feature type="strand" evidence="19">
    <location>
        <begin position="507"/>
        <end position="512"/>
    </location>
</feature>
<feature type="strand" evidence="19">
    <location>
        <begin position="515"/>
        <end position="521"/>
    </location>
</feature>
<feature type="strand" evidence="21">
    <location>
        <begin position="525"/>
        <end position="527"/>
    </location>
</feature>
<feature type="strand" evidence="19">
    <location>
        <begin position="540"/>
        <end position="544"/>
    </location>
</feature>
<feature type="strand" evidence="19">
    <location>
        <begin position="551"/>
        <end position="563"/>
    </location>
</feature>
<feature type="strand" evidence="19">
    <location>
        <begin position="566"/>
        <end position="575"/>
    </location>
</feature>
<feature type="helix" evidence="19">
    <location>
        <begin position="584"/>
        <end position="589"/>
    </location>
</feature>
<feature type="strand" evidence="20">
    <location>
        <begin position="593"/>
        <end position="595"/>
    </location>
</feature>
<dbReference type="EC" id="3.4.23.16"/>
<dbReference type="EC" id="2.7.7.49"/>
<dbReference type="EC" id="2.7.7.7"/>
<dbReference type="EC" id="3.1.26.13"/>
<dbReference type="EC" id="3.1.13.2"/>
<dbReference type="EC" id="2.7.7.-" evidence="4"/>
<dbReference type="EC" id="3.1.-.-" evidence="4"/>
<dbReference type="EMBL" id="Y00277">
    <property type="protein sequence ID" value="CAA68380.1"/>
    <property type="molecule type" value="Genomic_DNA"/>
</dbReference>
<dbReference type="PDB" id="1AZ5">
    <property type="method" value="X-ray"/>
    <property type="resolution" value="2.00 A"/>
    <property type="chains" value="A=498-595"/>
</dbReference>
<dbReference type="PDB" id="1C6V">
    <property type="method" value="X-ray"/>
    <property type="resolution" value="3.00 A"/>
    <property type="chains" value="A/B/C/D=1205-1368"/>
</dbReference>
<dbReference type="PDB" id="1SIV">
    <property type="method" value="X-ray"/>
    <property type="resolution" value="2.50 A"/>
    <property type="chains" value="A/B=498-596"/>
</dbReference>
<dbReference type="PDB" id="1TCW">
    <property type="method" value="X-ray"/>
    <property type="resolution" value="2.40 A"/>
    <property type="chains" value="A/B=498-596"/>
</dbReference>
<dbReference type="PDB" id="1YTI">
    <property type="method" value="X-ray"/>
    <property type="resolution" value="2.20 A"/>
    <property type="chains" value="A=498-595"/>
</dbReference>
<dbReference type="PDB" id="1YTJ">
    <property type="method" value="X-ray"/>
    <property type="resolution" value="2.50 A"/>
    <property type="chains" value="A=498-595"/>
</dbReference>
<dbReference type="PDBsum" id="1AZ5"/>
<dbReference type="PDBsum" id="1C6V"/>
<dbReference type="PDBsum" id="1SIV"/>
<dbReference type="PDBsum" id="1TCW"/>
<dbReference type="PDBsum" id="1YTI"/>
<dbReference type="PDBsum" id="1YTJ"/>
<dbReference type="SMR" id="P05896"/>
<dbReference type="DrugBank" id="DB04191">
    <property type="generic name" value="Skf 107457"/>
</dbReference>
<dbReference type="EvolutionaryTrace" id="P05896"/>
<dbReference type="PRO" id="PR:P05896"/>
<dbReference type="Proteomes" id="UP000007220">
    <property type="component" value="Segment"/>
</dbReference>
<dbReference type="GO" id="GO:0043657">
    <property type="term" value="C:host cell"/>
    <property type="evidence" value="ECO:0007669"/>
    <property type="project" value="GOC"/>
</dbReference>
<dbReference type="GO" id="GO:0030430">
    <property type="term" value="C:host cell cytoplasm"/>
    <property type="evidence" value="ECO:0007669"/>
    <property type="project" value="UniProtKB-SubCell"/>
</dbReference>
<dbReference type="GO" id="GO:0042025">
    <property type="term" value="C:host cell nucleus"/>
    <property type="evidence" value="ECO:0007669"/>
    <property type="project" value="UniProtKB-SubCell"/>
</dbReference>
<dbReference type="GO" id="GO:0020002">
    <property type="term" value="C:host cell plasma membrane"/>
    <property type="evidence" value="ECO:0007669"/>
    <property type="project" value="UniProtKB-SubCell"/>
</dbReference>
<dbReference type="GO" id="GO:0016020">
    <property type="term" value="C:membrane"/>
    <property type="evidence" value="ECO:0007669"/>
    <property type="project" value="UniProtKB-KW"/>
</dbReference>
<dbReference type="GO" id="GO:0019013">
    <property type="term" value="C:viral nucleocapsid"/>
    <property type="evidence" value="ECO:0007669"/>
    <property type="project" value="UniProtKB-KW"/>
</dbReference>
<dbReference type="GO" id="GO:0004190">
    <property type="term" value="F:aspartic-type endopeptidase activity"/>
    <property type="evidence" value="ECO:0007669"/>
    <property type="project" value="UniProtKB-KW"/>
</dbReference>
<dbReference type="GO" id="GO:0003677">
    <property type="term" value="F:DNA binding"/>
    <property type="evidence" value="ECO:0007669"/>
    <property type="project" value="UniProtKB-KW"/>
</dbReference>
<dbReference type="GO" id="GO:0003887">
    <property type="term" value="F:DNA-directed DNA polymerase activity"/>
    <property type="evidence" value="ECO:0007669"/>
    <property type="project" value="UniProtKB-KW"/>
</dbReference>
<dbReference type="GO" id="GO:0004533">
    <property type="term" value="F:exoribonuclease H activity"/>
    <property type="evidence" value="ECO:0007669"/>
    <property type="project" value="UniProtKB-EC"/>
</dbReference>
<dbReference type="GO" id="GO:0035613">
    <property type="term" value="F:RNA stem-loop binding"/>
    <property type="evidence" value="ECO:0007669"/>
    <property type="project" value="TreeGrafter"/>
</dbReference>
<dbReference type="GO" id="GO:0003964">
    <property type="term" value="F:RNA-directed DNA polymerase activity"/>
    <property type="evidence" value="ECO:0007669"/>
    <property type="project" value="UniProtKB-KW"/>
</dbReference>
<dbReference type="GO" id="GO:0004523">
    <property type="term" value="F:RNA-DNA hybrid ribonuclease activity"/>
    <property type="evidence" value="ECO:0007669"/>
    <property type="project" value="InterPro"/>
</dbReference>
<dbReference type="GO" id="GO:0005198">
    <property type="term" value="F:structural molecule activity"/>
    <property type="evidence" value="ECO:0007669"/>
    <property type="project" value="InterPro"/>
</dbReference>
<dbReference type="GO" id="GO:0008270">
    <property type="term" value="F:zinc ion binding"/>
    <property type="evidence" value="ECO:0007669"/>
    <property type="project" value="UniProtKB-KW"/>
</dbReference>
<dbReference type="GO" id="GO:0015074">
    <property type="term" value="P:DNA integration"/>
    <property type="evidence" value="ECO:0007669"/>
    <property type="project" value="UniProtKB-KW"/>
</dbReference>
<dbReference type="GO" id="GO:0006310">
    <property type="term" value="P:DNA recombination"/>
    <property type="evidence" value="ECO:0007669"/>
    <property type="project" value="UniProtKB-KW"/>
</dbReference>
<dbReference type="GO" id="GO:0075713">
    <property type="term" value="P:establishment of integrated proviral latency"/>
    <property type="evidence" value="ECO:0007669"/>
    <property type="project" value="UniProtKB-KW"/>
</dbReference>
<dbReference type="GO" id="GO:0006508">
    <property type="term" value="P:proteolysis"/>
    <property type="evidence" value="ECO:0007669"/>
    <property type="project" value="UniProtKB-KW"/>
</dbReference>
<dbReference type="GO" id="GO:0046718">
    <property type="term" value="P:symbiont entry into host cell"/>
    <property type="evidence" value="ECO:0007669"/>
    <property type="project" value="UniProtKB-KW"/>
</dbReference>
<dbReference type="GO" id="GO:0039657">
    <property type="term" value="P:symbiont-mediated suppression of host gene expression"/>
    <property type="evidence" value="ECO:0007669"/>
    <property type="project" value="UniProtKB-KW"/>
</dbReference>
<dbReference type="GO" id="GO:0044826">
    <property type="term" value="P:viral genome integration into host DNA"/>
    <property type="evidence" value="ECO:0007669"/>
    <property type="project" value="UniProtKB-KW"/>
</dbReference>
<dbReference type="GO" id="GO:0075732">
    <property type="term" value="P:viral penetration into host nucleus"/>
    <property type="evidence" value="ECO:0007669"/>
    <property type="project" value="UniProtKB-KW"/>
</dbReference>
<dbReference type="GO" id="GO:0075523">
    <property type="term" value="P:viral translational frameshifting"/>
    <property type="evidence" value="ECO:0007669"/>
    <property type="project" value="UniProtKB-KW"/>
</dbReference>
<dbReference type="CDD" id="cd05482">
    <property type="entry name" value="HIV_retropepsin_like"/>
    <property type="match status" value="1"/>
</dbReference>
<dbReference type="Gene3D" id="1.10.10.200">
    <property type="match status" value="1"/>
</dbReference>
<dbReference type="Gene3D" id="1.10.1200.30">
    <property type="match status" value="1"/>
</dbReference>
<dbReference type="Gene3D" id="3.30.70.270">
    <property type="match status" value="3"/>
</dbReference>
<dbReference type="Gene3D" id="2.40.70.10">
    <property type="entry name" value="Acid Proteases"/>
    <property type="match status" value="1"/>
</dbReference>
<dbReference type="Gene3D" id="3.10.10.10">
    <property type="entry name" value="HIV Type 1 Reverse Transcriptase, subunit A, domain 1"/>
    <property type="match status" value="1"/>
</dbReference>
<dbReference type="Gene3D" id="1.10.375.10">
    <property type="entry name" value="Human Immunodeficiency Virus Type 1 Capsid Protein"/>
    <property type="match status" value="1"/>
</dbReference>
<dbReference type="Gene3D" id="1.10.150.90">
    <property type="entry name" value="Immunodeficiency lentiviruses, gag gene matrix protein p17"/>
    <property type="match status" value="1"/>
</dbReference>
<dbReference type="Gene3D" id="2.30.30.10">
    <property type="entry name" value="Integrase, C-terminal domain superfamily, retroviral"/>
    <property type="match status" value="1"/>
</dbReference>
<dbReference type="Gene3D" id="3.30.420.10">
    <property type="entry name" value="Ribonuclease H-like superfamily/Ribonuclease H"/>
    <property type="match status" value="2"/>
</dbReference>
<dbReference type="Gene3D" id="1.20.5.760">
    <property type="entry name" value="Single helix bin"/>
    <property type="match status" value="1"/>
</dbReference>
<dbReference type="Gene3D" id="4.10.60.10">
    <property type="entry name" value="Zinc finger, CCHC-type"/>
    <property type="match status" value="1"/>
</dbReference>
<dbReference type="InterPro" id="IPR001969">
    <property type="entry name" value="Aspartic_peptidase_AS"/>
</dbReference>
<dbReference type="InterPro" id="IPR043502">
    <property type="entry name" value="DNA/RNA_pol_sf"/>
</dbReference>
<dbReference type="InterPro" id="IPR045345">
    <property type="entry name" value="Gag_p24_C"/>
</dbReference>
<dbReference type="InterPro" id="IPR017856">
    <property type="entry name" value="Integrase-like_N"/>
</dbReference>
<dbReference type="InterPro" id="IPR036862">
    <property type="entry name" value="Integrase_C_dom_sf_retrovir"/>
</dbReference>
<dbReference type="InterPro" id="IPR001037">
    <property type="entry name" value="Integrase_C_retrovir"/>
</dbReference>
<dbReference type="InterPro" id="IPR001584">
    <property type="entry name" value="Integrase_cat-core"/>
</dbReference>
<dbReference type="InterPro" id="IPR003308">
    <property type="entry name" value="Integrase_Zn-bd_dom_N"/>
</dbReference>
<dbReference type="InterPro" id="IPR000071">
    <property type="entry name" value="Lentvrl_matrix_N"/>
</dbReference>
<dbReference type="InterPro" id="IPR012344">
    <property type="entry name" value="Matrix_HIV/RSV_N"/>
</dbReference>
<dbReference type="InterPro" id="IPR001995">
    <property type="entry name" value="Peptidase_A2_cat"/>
</dbReference>
<dbReference type="InterPro" id="IPR021109">
    <property type="entry name" value="Peptidase_aspartic_dom_sf"/>
</dbReference>
<dbReference type="InterPro" id="IPR034170">
    <property type="entry name" value="Retropepsin-like_cat_dom"/>
</dbReference>
<dbReference type="InterPro" id="IPR018061">
    <property type="entry name" value="Retropepsins"/>
</dbReference>
<dbReference type="InterPro" id="IPR008916">
    <property type="entry name" value="Retrov_capsid_C"/>
</dbReference>
<dbReference type="InterPro" id="IPR008919">
    <property type="entry name" value="Retrov_capsid_N"/>
</dbReference>
<dbReference type="InterPro" id="IPR010999">
    <property type="entry name" value="Retrovr_matrix"/>
</dbReference>
<dbReference type="InterPro" id="IPR043128">
    <property type="entry name" value="Rev_trsase/Diguanyl_cyclase"/>
</dbReference>
<dbReference type="InterPro" id="IPR012337">
    <property type="entry name" value="RNaseH-like_sf"/>
</dbReference>
<dbReference type="InterPro" id="IPR002156">
    <property type="entry name" value="RNaseH_domain"/>
</dbReference>
<dbReference type="InterPro" id="IPR036397">
    <property type="entry name" value="RNaseH_sf"/>
</dbReference>
<dbReference type="InterPro" id="IPR000477">
    <property type="entry name" value="RT_dom"/>
</dbReference>
<dbReference type="InterPro" id="IPR010659">
    <property type="entry name" value="RVT_connect"/>
</dbReference>
<dbReference type="InterPro" id="IPR010661">
    <property type="entry name" value="RVT_thumb"/>
</dbReference>
<dbReference type="InterPro" id="IPR001878">
    <property type="entry name" value="Znf_CCHC"/>
</dbReference>
<dbReference type="InterPro" id="IPR036875">
    <property type="entry name" value="Znf_CCHC_sf"/>
</dbReference>
<dbReference type="PANTHER" id="PTHR41694">
    <property type="entry name" value="ENDOGENOUS RETROVIRUS GROUP K MEMBER POL PROTEIN"/>
    <property type="match status" value="1"/>
</dbReference>
<dbReference type="PANTHER" id="PTHR41694:SF3">
    <property type="entry name" value="RNA-DIRECTED DNA POLYMERASE-RELATED"/>
    <property type="match status" value="1"/>
</dbReference>
<dbReference type="Pfam" id="PF00540">
    <property type="entry name" value="Gag_p17"/>
    <property type="match status" value="1"/>
</dbReference>
<dbReference type="Pfam" id="PF00607">
    <property type="entry name" value="Gag_p24"/>
    <property type="match status" value="1"/>
</dbReference>
<dbReference type="Pfam" id="PF19317">
    <property type="entry name" value="Gag_p24_C"/>
    <property type="match status" value="1"/>
</dbReference>
<dbReference type="Pfam" id="PF00552">
    <property type="entry name" value="IN_DBD_C"/>
    <property type="match status" value="1"/>
</dbReference>
<dbReference type="Pfam" id="PF02022">
    <property type="entry name" value="Integrase_Zn"/>
    <property type="match status" value="1"/>
</dbReference>
<dbReference type="Pfam" id="PF00075">
    <property type="entry name" value="RNase_H"/>
    <property type="match status" value="1"/>
</dbReference>
<dbReference type="Pfam" id="PF00665">
    <property type="entry name" value="rve"/>
    <property type="match status" value="1"/>
</dbReference>
<dbReference type="Pfam" id="PF00077">
    <property type="entry name" value="RVP"/>
    <property type="match status" value="1"/>
</dbReference>
<dbReference type="Pfam" id="PF00078">
    <property type="entry name" value="RVT_1"/>
    <property type="match status" value="1"/>
</dbReference>
<dbReference type="Pfam" id="PF06815">
    <property type="entry name" value="RVT_connect"/>
    <property type="match status" value="1"/>
</dbReference>
<dbReference type="Pfam" id="PF06817">
    <property type="entry name" value="RVT_thumb"/>
    <property type="match status" value="1"/>
</dbReference>
<dbReference type="Pfam" id="PF00098">
    <property type="entry name" value="zf-CCHC"/>
    <property type="match status" value="1"/>
</dbReference>
<dbReference type="PRINTS" id="PR00234">
    <property type="entry name" value="HIV1MATRIX"/>
</dbReference>
<dbReference type="SMART" id="SM00343">
    <property type="entry name" value="ZnF_C2HC"/>
    <property type="match status" value="2"/>
</dbReference>
<dbReference type="SUPFAM" id="SSF50630">
    <property type="entry name" value="Acid proteases"/>
    <property type="match status" value="1"/>
</dbReference>
<dbReference type="SUPFAM" id="SSF50122">
    <property type="entry name" value="DNA-binding domain of retroviral integrase"/>
    <property type="match status" value="1"/>
</dbReference>
<dbReference type="SUPFAM" id="SSF56672">
    <property type="entry name" value="DNA/RNA polymerases"/>
    <property type="match status" value="1"/>
</dbReference>
<dbReference type="SUPFAM" id="SSF46919">
    <property type="entry name" value="N-terminal Zn binding domain of HIV integrase"/>
    <property type="match status" value="1"/>
</dbReference>
<dbReference type="SUPFAM" id="SSF47836">
    <property type="entry name" value="Retroviral matrix proteins"/>
    <property type="match status" value="1"/>
</dbReference>
<dbReference type="SUPFAM" id="SSF47353">
    <property type="entry name" value="Retrovirus capsid dimerization domain-like"/>
    <property type="match status" value="1"/>
</dbReference>
<dbReference type="SUPFAM" id="SSF47943">
    <property type="entry name" value="Retrovirus capsid protein, N-terminal core domain"/>
    <property type="match status" value="1"/>
</dbReference>
<dbReference type="SUPFAM" id="SSF57756">
    <property type="entry name" value="Retrovirus zinc finger-like domains"/>
    <property type="match status" value="1"/>
</dbReference>
<dbReference type="SUPFAM" id="SSF53098">
    <property type="entry name" value="Ribonuclease H-like"/>
    <property type="match status" value="2"/>
</dbReference>
<dbReference type="PROSITE" id="PS50175">
    <property type="entry name" value="ASP_PROT_RETROV"/>
    <property type="match status" value="1"/>
</dbReference>
<dbReference type="PROSITE" id="PS00141">
    <property type="entry name" value="ASP_PROTEASE"/>
    <property type="match status" value="1"/>
</dbReference>
<dbReference type="PROSITE" id="PS50994">
    <property type="entry name" value="INTEGRASE"/>
    <property type="match status" value="1"/>
</dbReference>
<dbReference type="PROSITE" id="PS51027">
    <property type="entry name" value="INTEGRASE_DBD"/>
    <property type="match status" value="1"/>
</dbReference>
<dbReference type="PROSITE" id="PS50879">
    <property type="entry name" value="RNASE_H_1"/>
    <property type="match status" value="1"/>
</dbReference>
<dbReference type="PROSITE" id="PS50878">
    <property type="entry name" value="RT_POL"/>
    <property type="match status" value="1"/>
</dbReference>
<dbReference type="PROSITE" id="PS50158">
    <property type="entry name" value="ZF_CCHC"/>
    <property type="match status" value="2"/>
</dbReference>
<dbReference type="PROSITE" id="PS50876">
    <property type="entry name" value="ZF_INTEGRASE"/>
    <property type="match status" value="1"/>
</dbReference>
<organism>
    <name type="scientific">Simian immunodeficiency virus (isolate Mm142-83)</name>
    <name type="common">SIV-mac</name>
    <name type="synonym">Simian immunodeficiency virus rhesus monkey</name>
    <dbReference type="NCBI Taxonomy" id="11733"/>
    <lineage>
        <taxon>Viruses</taxon>
        <taxon>Riboviria</taxon>
        <taxon>Pararnavirae</taxon>
        <taxon>Artverviricota</taxon>
        <taxon>Revtraviricetes</taxon>
        <taxon>Ortervirales</taxon>
        <taxon>Retroviridae</taxon>
        <taxon>Orthoretrovirinae</taxon>
        <taxon>Lentivirus</taxon>
        <taxon>Simian immunodeficiency virus</taxon>
    </lineage>
</organism>
<name>POL_SIVM1</name>